<organism>
    <name type="scientific">Mesomycoplasma hyopneumoniae (strain J / ATCC 25934 / NCTC 10110)</name>
    <name type="common">Mycoplasma hyopneumoniae</name>
    <dbReference type="NCBI Taxonomy" id="262719"/>
    <lineage>
        <taxon>Bacteria</taxon>
        <taxon>Bacillati</taxon>
        <taxon>Mycoplasmatota</taxon>
        <taxon>Mycoplasmoidales</taxon>
        <taxon>Metamycoplasmataceae</taxon>
        <taxon>Mesomycoplasma</taxon>
    </lineage>
</organism>
<comment type="function">
    <text evidence="1">Binds directly to 23S ribosomal RNA and is necessary for the in vitro assembly process of the 50S ribosomal subunit. It is not involved in the protein synthesizing functions of that subunit.</text>
</comment>
<comment type="similarity">
    <text evidence="1">Belongs to the bacterial ribosomal protein bL20 family.</text>
</comment>
<sequence>MRVKGGSITRQRRRRWLKLAKGYWGHKSIGFKTAKQAVVKSWTYAFRDRKQRKRDFRKLWISRINAAARNQGISYSQLMHKIKQSNIEINRKMLAEMAIHHQSDFENIVKLAIAKSA</sequence>
<proteinExistence type="inferred from homology"/>
<keyword id="KW-0687">Ribonucleoprotein</keyword>
<keyword id="KW-0689">Ribosomal protein</keyword>
<keyword id="KW-0694">RNA-binding</keyword>
<keyword id="KW-0699">rRNA-binding</keyword>
<reference key="1">
    <citation type="journal article" date="2005" name="J. Bacteriol.">
        <title>Swine and poultry pathogens: the complete genome sequences of two strains of Mycoplasma hyopneumoniae and a strain of Mycoplasma synoviae.</title>
        <authorList>
            <person name="Vasconcelos A.T.R."/>
            <person name="Ferreira H.B."/>
            <person name="Bizarro C.V."/>
            <person name="Bonatto S.L."/>
            <person name="Carvalho M.O."/>
            <person name="Pinto P.M."/>
            <person name="Almeida D.F."/>
            <person name="Almeida L.G.P."/>
            <person name="Almeida R."/>
            <person name="Alves-Junior L."/>
            <person name="Assuncao E.N."/>
            <person name="Azevedo V.A.C."/>
            <person name="Bogo M.R."/>
            <person name="Brigido M.M."/>
            <person name="Brocchi M."/>
            <person name="Burity H.A."/>
            <person name="Camargo A.A."/>
            <person name="Camargo S.S."/>
            <person name="Carepo M.S."/>
            <person name="Carraro D.M."/>
            <person name="de Mattos Cascardo J.C."/>
            <person name="Castro L.A."/>
            <person name="Cavalcanti G."/>
            <person name="Chemale G."/>
            <person name="Collevatti R.G."/>
            <person name="Cunha C.W."/>
            <person name="Dallagiovanna B."/>
            <person name="Dambros B.P."/>
            <person name="Dellagostin O.A."/>
            <person name="Falcao C."/>
            <person name="Fantinatti-Garboggini F."/>
            <person name="Felipe M.S.S."/>
            <person name="Fiorentin L."/>
            <person name="Franco G.R."/>
            <person name="Freitas N.S.A."/>
            <person name="Frias D."/>
            <person name="Grangeiro T.B."/>
            <person name="Grisard E.C."/>
            <person name="Guimaraes C.T."/>
            <person name="Hungria M."/>
            <person name="Jardim S.N."/>
            <person name="Krieger M.A."/>
            <person name="Laurino J.P."/>
            <person name="Lima L.F.A."/>
            <person name="Lopes M.I."/>
            <person name="Loreto E.L.S."/>
            <person name="Madeira H.M.F."/>
            <person name="Manfio G.P."/>
            <person name="Maranhao A.Q."/>
            <person name="Martinkovics C.T."/>
            <person name="Medeiros S.R.B."/>
            <person name="Moreira M.A.M."/>
            <person name="Neiva M."/>
            <person name="Ramalho-Neto C.E."/>
            <person name="Nicolas M.F."/>
            <person name="Oliveira S.C."/>
            <person name="Paixao R.F.C."/>
            <person name="Pedrosa F.O."/>
            <person name="Pena S.D.J."/>
            <person name="Pereira M."/>
            <person name="Pereira-Ferrari L."/>
            <person name="Piffer I."/>
            <person name="Pinto L.S."/>
            <person name="Potrich D.P."/>
            <person name="Salim A.C.M."/>
            <person name="Santos F.R."/>
            <person name="Schmitt R."/>
            <person name="Schneider M.P.C."/>
            <person name="Schrank A."/>
            <person name="Schrank I.S."/>
            <person name="Schuck A.F."/>
            <person name="Seuanez H.N."/>
            <person name="Silva D.W."/>
            <person name="Silva R."/>
            <person name="Silva S.C."/>
            <person name="Soares C.M.A."/>
            <person name="Souza K.R.L."/>
            <person name="Souza R.C."/>
            <person name="Staats C.C."/>
            <person name="Steffens M.B.R."/>
            <person name="Teixeira S.M.R."/>
            <person name="Urmenyi T.P."/>
            <person name="Vainstein M.H."/>
            <person name="Zuccherato L.W."/>
            <person name="Simpson A.J.G."/>
            <person name="Zaha A."/>
        </authorList>
    </citation>
    <scope>NUCLEOTIDE SEQUENCE [LARGE SCALE GENOMIC DNA]</scope>
    <source>
        <strain>J / ATCC 25934 / NCTC 10110</strain>
    </source>
</reference>
<evidence type="ECO:0000255" key="1">
    <source>
        <dbReference type="HAMAP-Rule" id="MF_00382"/>
    </source>
</evidence>
<evidence type="ECO:0000305" key="2"/>
<gene>
    <name evidence="1" type="primary">rplT</name>
    <name type="ordered locus">MHJ_0119</name>
</gene>
<name>RL20_MESHJ</name>
<feature type="chain" id="PRO_0000243702" description="Large ribosomal subunit protein bL20">
    <location>
        <begin position="1"/>
        <end position="117"/>
    </location>
</feature>
<protein>
    <recommendedName>
        <fullName evidence="1">Large ribosomal subunit protein bL20</fullName>
    </recommendedName>
    <alternativeName>
        <fullName evidence="2">50S ribosomal protein L20</fullName>
    </alternativeName>
</protein>
<accession>Q4AAL0</accession>
<dbReference type="EMBL" id="AE017243">
    <property type="protein sequence ID" value="AAZ44211.1"/>
    <property type="molecule type" value="Genomic_DNA"/>
</dbReference>
<dbReference type="RefSeq" id="WP_011283924.1">
    <property type="nucleotide sequence ID" value="NC_007295.1"/>
</dbReference>
<dbReference type="SMR" id="Q4AAL0"/>
<dbReference type="GeneID" id="41334421"/>
<dbReference type="KEGG" id="mhj:MHJ_0119"/>
<dbReference type="eggNOG" id="COG0292">
    <property type="taxonomic scope" value="Bacteria"/>
</dbReference>
<dbReference type="HOGENOM" id="CLU_123265_0_1_14"/>
<dbReference type="OrthoDB" id="9808966at2"/>
<dbReference type="Proteomes" id="UP000000548">
    <property type="component" value="Chromosome"/>
</dbReference>
<dbReference type="GO" id="GO:1990904">
    <property type="term" value="C:ribonucleoprotein complex"/>
    <property type="evidence" value="ECO:0007669"/>
    <property type="project" value="UniProtKB-KW"/>
</dbReference>
<dbReference type="GO" id="GO:0005840">
    <property type="term" value="C:ribosome"/>
    <property type="evidence" value="ECO:0007669"/>
    <property type="project" value="UniProtKB-KW"/>
</dbReference>
<dbReference type="GO" id="GO:0019843">
    <property type="term" value="F:rRNA binding"/>
    <property type="evidence" value="ECO:0007669"/>
    <property type="project" value="UniProtKB-UniRule"/>
</dbReference>
<dbReference type="GO" id="GO:0003735">
    <property type="term" value="F:structural constituent of ribosome"/>
    <property type="evidence" value="ECO:0007669"/>
    <property type="project" value="InterPro"/>
</dbReference>
<dbReference type="GO" id="GO:0000027">
    <property type="term" value="P:ribosomal large subunit assembly"/>
    <property type="evidence" value="ECO:0007669"/>
    <property type="project" value="UniProtKB-UniRule"/>
</dbReference>
<dbReference type="GO" id="GO:0006412">
    <property type="term" value="P:translation"/>
    <property type="evidence" value="ECO:0007669"/>
    <property type="project" value="InterPro"/>
</dbReference>
<dbReference type="CDD" id="cd07026">
    <property type="entry name" value="Ribosomal_L20"/>
    <property type="match status" value="1"/>
</dbReference>
<dbReference type="FunFam" id="1.10.1900.20:FF:000001">
    <property type="entry name" value="50S ribosomal protein L20"/>
    <property type="match status" value="1"/>
</dbReference>
<dbReference type="Gene3D" id="6.10.160.10">
    <property type="match status" value="1"/>
</dbReference>
<dbReference type="Gene3D" id="1.10.1900.20">
    <property type="entry name" value="Ribosomal protein L20"/>
    <property type="match status" value="1"/>
</dbReference>
<dbReference type="HAMAP" id="MF_00382">
    <property type="entry name" value="Ribosomal_bL20"/>
    <property type="match status" value="1"/>
</dbReference>
<dbReference type="InterPro" id="IPR005813">
    <property type="entry name" value="Ribosomal_bL20"/>
</dbReference>
<dbReference type="InterPro" id="IPR049946">
    <property type="entry name" value="RIBOSOMAL_L20_CS"/>
</dbReference>
<dbReference type="InterPro" id="IPR035566">
    <property type="entry name" value="Ribosomal_protein_bL20_C"/>
</dbReference>
<dbReference type="NCBIfam" id="TIGR01032">
    <property type="entry name" value="rplT_bact"/>
    <property type="match status" value="1"/>
</dbReference>
<dbReference type="PANTHER" id="PTHR10986">
    <property type="entry name" value="39S RIBOSOMAL PROTEIN L20"/>
    <property type="match status" value="1"/>
</dbReference>
<dbReference type="Pfam" id="PF00453">
    <property type="entry name" value="Ribosomal_L20"/>
    <property type="match status" value="1"/>
</dbReference>
<dbReference type="PRINTS" id="PR00062">
    <property type="entry name" value="RIBOSOMALL20"/>
</dbReference>
<dbReference type="SUPFAM" id="SSF74731">
    <property type="entry name" value="Ribosomal protein L20"/>
    <property type="match status" value="1"/>
</dbReference>
<dbReference type="PROSITE" id="PS00937">
    <property type="entry name" value="RIBOSOMAL_L20"/>
    <property type="match status" value="1"/>
</dbReference>